<name>PGS1_RAT</name>
<feature type="signal peptide" evidence="4">
    <location>
        <begin position="1"/>
        <end position="16"/>
    </location>
</feature>
<feature type="propeptide" id="PRO_0000032697" evidence="2">
    <location>
        <begin position="17"/>
        <end position="37"/>
    </location>
</feature>
<feature type="chain" id="PRO_0000032698" description="Biglycan">
    <location>
        <begin position="38"/>
        <end position="369"/>
    </location>
</feature>
<feature type="repeat" description="LRR 1">
    <location>
        <begin position="83"/>
        <end position="103"/>
    </location>
</feature>
<feature type="repeat" description="LRR 2">
    <location>
        <begin position="104"/>
        <end position="127"/>
    </location>
</feature>
<feature type="repeat" description="LRR 3">
    <location>
        <begin position="128"/>
        <end position="151"/>
    </location>
</feature>
<feature type="repeat" description="LRR 4">
    <location>
        <begin position="152"/>
        <end position="172"/>
    </location>
</feature>
<feature type="repeat" description="LRR 5">
    <location>
        <begin position="173"/>
        <end position="196"/>
    </location>
</feature>
<feature type="repeat" description="LRR 6">
    <location>
        <begin position="197"/>
        <end position="221"/>
    </location>
</feature>
<feature type="repeat" description="LRR 7">
    <location>
        <begin position="222"/>
        <end position="242"/>
    </location>
</feature>
<feature type="repeat" description="LRR 8">
    <location>
        <begin position="243"/>
        <end position="266"/>
    </location>
</feature>
<feature type="repeat" description="LRR 9">
    <location>
        <begin position="267"/>
        <end position="290"/>
    </location>
</feature>
<feature type="repeat" description="LRR 10">
    <location>
        <begin position="291"/>
        <end position="313"/>
    </location>
</feature>
<feature type="repeat" description="LRR 11">
    <location>
        <begin position="314"/>
        <end position="343"/>
    </location>
</feature>
<feature type="repeat" description="LRR 12">
    <location>
        <begin position="344"/>
        <end position="369"/>
    </location>
</feature>
<feature type="glycosylation site" description="O-linked (Xyl...) (glycosaminoglycan) serine" evidence="2">
    <location>
        <position position="42"/>
    </location>
</feature>
<feature type="glycosylation site" description="O-linked (Xyl...) (glycosaminoglycan) serine" evidence="2">
    <location>
        <position position="48"/>
    </location>
</feature>
<feature type="glycosylation site" description="N-linked (GlcNAc...) asparagine" evidence="3">
    <location>
        <position position="271"/>
    </location>
</feature>
<feature type="glycosylation site" description="N-linked (GlcNAc...) asparagine" evidence="3">
    <location>
        <position position="312"/>
    </location>
</feature>
<feature type="disulfide bond" evidence="1">
    <location>
        <begin position="64"/>
        <end position="70"/>
    </location>
</feature>
<feature type="disulfide bond" evidence="1">
    <location>
        <begin position="68"/>
        <end position="77"/>
    </location>
</feature>
<feature type="disulfide bond" evidence="1">
    <location>
        <begin position="322"/>
        <end position="355"/>
    </location>
</feature>
<protein>
    <recommendedName>
        <fullName>Biglycan</fullName>
    </recommendedName>
    <alternativeName>
        <fullName>Bone/cartilage proteoglycan I</fullName>
    </alternativeName>
    <alternativeName>
        <fullName>PG-S1</fullName>
    </alternativeName>
</protein>
<evidence type="ECO:0000250" key="1"/>
<evidence type="ECO:0000250" key="2">
    <source>
        <dbReference type="UniProtKB" id="P21810"/>
    </source>
</evidence>
<evidence type="ECO:0000255" key="3"/>
<evidence type="ECO:0000269" key="4">
    <source>
    </source>
</evidence>
<evidence type="ECO:0000305" key="5"/>
<proteinExistence type="evidence at protein level"/>
<accession>P47853</accession>
<comment type="function">
    <text evidence="1">May be involved in collagen fiber assembly.</text>
</comment>
<comment type="subunit">
    <text evidence="1">Homodimer. Forms a ternary complex with MFAP2 and ELN (By similarity).</text>
</comment>
<comment type="subcellular location">
    <subcellularLocation>
        <location evidence="1">Secreted</location>
        <location evidence="1">Extracellular space</location>
        <location evidence="1">Extracellular matrix</location>
    </subcellularLocation>
</comment>
<comment type="tissue specificity">
    <text>Found in several connective tissues, especially in articular cartilages.</text>
</comment>
<comment type="PTM">
    <text evidence="1">The two attached glycosaminoglycan chains can be either chondroitin sulfate or dermatan sulfate.</text>
</comment>
<comment type="similarity">
    <text evidence="5">Belongs to the small leucine-rich proteoglycan (SLRP) family. SLRP class I subfamily.</text>
</comment>
<keyword id="KW-1015">Disulfide bond</keyword>
<keyword id="KW-0272">Extracellular matrix</keyword>
<keyword id="KW-0325">Glycoprotein</keyword>
<keyword id="KW-0433">Leucine-rich repeat</keyword>
<keyword id="KW-0654">Proteoglycan</keyword>
<keyword id="KW-1185">Reference proteome</keyword>
<keyword id="KW-0677">Repeat</keyword>
<keyword id="KW-0964">Secreted</keyword>
<keyword id="KW-0732">Signal</keyword>
<reference key="1">
    <citation type="journal article" date="1990" name="Eur. J. Cell Biol.">
        <title>Vascular smooth muscle biglycan represents a highly conserved proteoglycan within the arterial wall.</title>
        <authorList>
            <person name="Dreher K.L."/>
            <person name="Asundi V.K."/>
            <person name="Matzura D."/>
            <person name="Cowan K."/>
        </authorList>
    </citation>
    <scope>NUCLEOTIDE SEQUENCE [MRNA]</scope>
    <source>
        <tissue>Vascular smooth muscle</tissue>
    </source>
</reference>
<reference key="2">
    <citation type="journal article" date="2004" name="Genome Res.">
        <title>The status, quality, and expansion of the NIH full-length cDNA project: the Mammalian Gene Collection (MGC).</title>
        <authorList>
            <consortium name="The MGC Project Team"/>
        </authorList>
    </citation>
    <scope>NUCLEOTIDE SEQUENCE [LARGE SCALE MRNA]</scope>
    <source>
        <tissue>Heart</tissue>
    </source>
</reference>
<reference key="3">
    <citation type="journal article" date="2015" name="J. Proteome Res.">
        <title>Peptidomics for studying limited proteolysis.</title>
        <authorList>
            <person name="Tsuchiya T."/>
            <person name="Osaki T."/>
            <person name="Minamino N."/>
            <person name="Sasaki K."/>
        </authorList>
    </citation>
    <scope>CLEAVAGE OF SIGNAL PEPTIDE AFTER ALA-16</scope>
    <scope>IDENTIFICATION BY MASS SPECTROMETRY</scope>
</reference>
<sequence length="369" mass="41706">MRPLWLLTLLLALSQALPFEQKGFWDFTLDDGLLMMNDEEASGSDTTSGVPDLDSLTPTFSAMCPFGCHCHLRVVQCSDLGLKTVPKEISPDTTLLDLQNNDISELRKDDFKGLQHLYALVLVNNKISKIHEKAFSPLRKLQKLYISKNHLVEIPPNLPSSLVELRIHDNRIRKVPKGVFSGLRNMNCIEMGGNPLENSGFEPGAFDGLKLNYLRISEAKLTGIPKDLPETLNELHLDHNKIQAIELEDLLRYSKLYRLGLGHNQIRMIENGSLSFLPTLRELHLDNNKLSRVPAGLPDLKLLQVVYLHSNNITKVGINDFCPMGFGVKRAYYNGISLFNNPVPYWEVQPATFRCVTDRLAIQFGNYKK</sequence>
<gene>
    <name type="primary">Bgn</name>
</gene>
<dbReference type="EMBL" id="U17834">
    <property type="protein sequence ID" value="AAA58797.1"/>
    <property type="molecule type" value="mRNA"/>
</dbReference>
<dbReference type="EMBL" id="BC072480">
    <property type="protein sequence ID" value="AAH72480.1"/>
    <property type="molecule type" value="mRNA"/>
</dbReference>
<dbReference type="PIR" id="PT0077">
    <property type="entry name" value="PT0077"/>
</dbReference>
<dbReference type="PIR" id="S32793">
    <property type="entry name" value="S32793"/>
</dbReference>
<dbReference type="RefSeq" id="NP_058783.1">
    <property type="nucleotide sequence ID" value="NM_017087.1"/>
</dbReference>
<dbReference type="SMR" id="P47853"/>
<dbReference type="BioGRID" id="247235">
    <property type="interactions" value="4"/>
</dbReference>
<dbReference type="FunCoup" id="P47853">
    <property type="interactions" value="163"/>
</dbReference>
<dbReference type="IntAct" id="P47853">
    <property type="interactions" value="9"/>
</dbReference>
<dbReference type="STRING" id="10116.ENSRNOP00000072449"/>
<dbReference type="GlyCosmos" id="P47853">
    <property type="glycosylation" value="4 sites, No reported glycans"/>
</dbReference>
<dbReference type="GlyGen" id="P47853">
    <property type="glycosylation" value="4 sites"/>
</dbReference>
<dbReference type="iPTMnet" id="P47853"/>
<dbReference type="PhosphoSitePlus" id="P47853"/>
<dbReference type="PaxDb" id="10116-ENSRNOP00000023920"/>
<dbReference type="Ensembl" id="ENSRNOT00000119907.1">
    <property type="protein sequence ID" value="ENSRNOP00000078269.1"/>
    <property type="gene ID" value="ENSRNOG00000055962.2"/>
</dbReference>
<dbReference type="GeneID" id="25181"/>
<dbReference type="KEGG" id="rno:25181"/>
<dbReference type="AGR" id="RGD:2207"/>
<dbReference type="CTD" id="633"/>
<dbReference type="RGD" id="2207">
    <property type="gene designation" value="Bgn"/>
</dbReference>
<dbReference type="eggNOG" id="KOG0619">
    <property type="taxonomic scope" value="Eukaryota"/>
</dbReference>
<dbReference type="GeneTree" id="ENSGT00940000155311"/>
<dbReference type="HOGENOM" id="CLU_000288_186_0_1"/>
<dbReference type="InParanoid" id="P47853"/>
<dbReference type="OrthoDB" id="12590at9989"/>
<dbReference type="PhylomeDB" id="P47853"/>
<dbReference type="TreeFam" id="TF334562"/>
<dbReference type="Reactome" id="R-RNO-1971475">
    <property type="pathway name" value="A tetrasaccharide linker sequence is required for GAG synthesis"/>
</dbReference>
<dbReference type="Reactome" id="R-RNO-2022870">
    <property type="pathway name" value="Chondroitin sulfate biosynthesis"/>
</dbReference>
<dbReference type="Reactome" id="R-RNO-2022923">
    <property type="pathway name" value="Dermatan sulfate biosynthesis"/>
</dbReference>
<dbReference type="Reactome" id="R-RNO-2024101">
    <property type="pathway name" value="CS/DS degradation"/>
</dbReference>
<dbReference type="Reactome" id="R-RNO-3000178">
    <property type="pathway name" value="ECM proteoglycans"/>
</dbReference>
<dbReference type="PRO" id="PR:P47853"/>
<dbReference type="Proteomes" id="UP000002494">
    <property type="component" value="Chromosome X"/>
</dbReference>
<dbReference type="Bgee" id="ENSRNOG00000055962">
    <property type="expression patterns" value="Expressed in lung and 18 other cell types or tissues"/>
</dbReference>
<dbReference type="GO" id="GO:0009986">
    <property type="term" value="C:cell surface"/>
    <property type="evidence" value="ECO:0000266"/>
    <property type="project" value="RGD"/>
</dbReference>
<dbReference type="GO" id="GO:0031012">
    <property type="term" value="C:extracellular matrix"/>
    <property type="evidence" value="ECO:0000266"/>
    <property type="project" value="RGD"/>
</dbReference>
<dbReference type="GO" id="GO:0005615">
    <property type="term" value="C:extracellular space"/>
    <property type="evidence" value="ECO:0000318"/>
    <property type="project" value="GO_Central"/>
</dbReference>
<dbReference type="GO" id="GO:0042383">
    <property type="term" value="C:sarcolemma"/>
    <property type="evidence" value="ECO:0000266"/>
    <property type="project" value="RGD"/>
</dbReference>
<dbReference type="GO" id="GO:0030133">
    <property type="term" value="C:transport vesicle"/>
    <property type="evidence" value="ECO:0007669"/>
    <property type="project" value="Ensembl"/>
</dbReference>
<dbReference type="GO" id="GO:0019955">
    <property type="term" value="F:cytokine binding"/>
    <property type="evidence" value="ECO:0000266"/>
    <property type="project" value="RGD"/>
</dbReference>
<dbReference type="GO" id="GO:0050840">
    <property type="term" value="F:extracellular matrix binding"/>
    <property type="evidence" value="ECO:0000266"/>
    <property type="project" value="RGD"/>
</dbReference>
<dbReference type="GO" id="GO:0005539">
    <property type="term" value="F:glycosaminoglycan binding"/>
    <property type="evidence" value="ECO:0000266"/>
    <property type="project" value="RGD"/>
</dbReference>
<dbReference type="GO" id="GO:0061975">
    <property type="term" value="P:articular cartilage development"/>
    <property type="evidence" value="ECO:0000266"/>
    <property type="project" value="RGD"/>
</dbReference>
<dbReference type="GO" id="GO:0001974">
    <property type="term" value="P:blood vessel remodeling"/>
    <property type="evidence" value="ECO:0000270"/>
    <property type="project" value="RGD"/>
</dbReference>
<dbReference type="GO" id="GO:0060348">
    <property type="term" value="P:bone development"/>
    <property type="evidence" value="ECO:0000266"/>
    <property type="project" value="RGD"/>
</dbReference>
<dbReference type="FunFam" id="3.80.10.10:FF:000038">
    <property type="entry name" value="Biglycan"/>
    <property type="match status" value="1"/>
</dbReference>
<dbReference type="Gene3D" id="3.80.10.10">
    <property type="entry name" value="Ribonuclease Inhibitor"/>
    <property type="match status" value="1"/>
</dbReference>
<dbReference type="InterPro" id="IPR001611">
    <property type="entry name" value="Leu-rich_rpt"/>
</dbReference>
<dbReference type="InterPro" id="IPR003591">
    <property type="entry name" value="Leu-rich_rpt_typical-subtyp"/>
</dbReference>
<dbReference type="InterPro" id="IPR032675">
    <property type="entry name" value="LRR_dom_sf"/>
</dbReference>
<dbReference type="InterPro" id="IPR000372">
    <property type="entry name" value="LRRNT"/>
</dbReference>
<dbReference type="InterPro" id="IPR050333">
    <property type="entry name" value="SLRP"/>
</dbReference>
<dbReference type="InterPro" id="IPR016352">
    <property type="entry name" value="SLRP_I_decor/aspor/byglycan"/>
</dbReference>
<dbReference type="PANTHER" id="PTHR45712">
    <property type="entry name" value="AGAP008170-PA"/>
    <property type="match status" value="1"/>
</dbReference>
<dbReference type="PANTHER" id="PTHR45712:SF11">
    <property type="entry name" value="BIGLYCAN"/>
    <property type="match status" value="1"/>
</dbReference>
<dbReference type="Pfam" id="PF13855">
    <property type="entry name" value="LRR_8"/>
    <property type="match status" value="3"/>
</dbReference>
<dbReference type="Pfam" id="PF01462">
    <property type="entry name" value="LRRNT"/>
    <property type="match status" value="1"/>
</dbReference>
<dbReference type="PIRSF" id="PIRSF002490">
    <property type="entry name" value="SLRP_I"/>
    <property type="match status" value="1"/>
</dbReference>
<dbReference type="SMART" id="SM00364">
    <property type="entry name" value="LRR_BAC"/>
    <property type="match status" value="3"/>
</dbReference>
<dbReference type="SMART" id="SM00369">
    <property type="entry name" value="LRR_TYP"/>
    <property type="match status" value="8"/>
</dbReference>
<dbReference type="SMART" id="SM00013">
    <property type="entry name" value="LRRNT"/>
    <property type="match status" value="1"/>
</dbReference>
<dbReference type="SUPFAM" id="SSF52058">
    <property type="entry name" value="L domain-like"/>
    <property type="match status" value="1"/>
</dbReference>
<dbReference type="PROSITE" id="PS51450">
    <property type="entry name" value="LRR"/>
    <property type="match status" value="8"/>
</dbReference>
<organism>
    <name type="scientific">Rattus norvegicus</name>
    <name type="common">Rat</name>
    <dbReference type="NCBI Taxonomy" id="10116"/>
    <lineage>
        <taxon>Eukaryota</taxon>
        <taxon>Metazoa</taxon>
        <taxon>Chordata</taxon>
        <taxon>Craniata</taxon>
        <taxon>Vertebrata</taxon>
        <taxon>Euteleostomi</taxon>
        <taxon>Mammalia</taxon>
        <taxon>Eutheria</taxon>
        <taxon>Euarchontoglires</taxon>
        <taxon>Glires</taxon>
        <taxon>Rodentia</taxon>
        <taxon>Myomorpha</taxon>
        <taxon>Muroidea</taxon>
        <taxon>Muridae</taxon>
        <taxon>Murinae</taxon>
        <taxon>Rattus</taxon>
    </lineage>
</organism>